<organism>
    <name type="scientific">Burkholderia cenocepacia (strain HI2424)</name>
    <dbReference type="NCBI Taxonomy" id="331272"/>
    <lineage>
        <taxon>Bacteria</taxon>
        <taxon>Pseudomonadati</taxon>
        <taxon>Pseudomonadota</taxon>
        <taxon>Betaproteobacteria</taxon>
        <taxon>Burkholderiales</taxon>
        <taxon>Burkholderiaceae</taxon>
        <taxon>Burkholderia</taxon>
        <taxon>Burkholderia cepacia complex</taxon>
    </lineage>
</organism>
<proteinExistence type="inferred from homology"/>
<sequence length="521" mass="55547">MIKQALISVSDKTGIVDFAKSLSDLGVKLLSTGGTAKLLADAGLPVTEVADYTGFPEMLDGRVKTLHPKVHGGILARRDLPEHMQALEQHGIPTIDLLVVNLYPFVATIAKDDCTLADAIENIDIGGPTMLRSAAKNHRDVTVVVDPADYAVVLDEMKANGNTVGYPTNFRLATKVFAHTAQYDGAITNYLTSLTDELKHASRSTYPATLNLAFDKVQDLRYGENPHQSAAFYRDLATPAGALANYRQLQGKELSYNNIADSDAAWECVKTFDAPACVIIKHANPCGVAVGNDSADAYAKAFQTDPTSAFGGIIAFNREVDEAAAQAVAKQFVEVLIAPSFSDAAKQVFAAKQNVRLLEIALGDGHNAFDLKRVGGGLLVQSLDSRNVQPSELRVVTKRQPTAKEMDDLLFAWRVAKYVKSNAIVFCGNGMTLGVGAGQMSRVDSARIASIKAQNAGLTLAGSAVASDAFFPFRDGLDVVVAAGATCVIQPGGSMRDDEVIAAADEHGIAMVLTGVRHFRH</sequence>
<accession>A0K4L7</accession>
<feature type="chain" id="PRO_1000018852" description="Bifunctional purine biosynthesis protein PurH">
    <location>
        <begin position="1"/>
        <end position="521"/>
    </location>
</feature>
<feature type="domain" description="MGS-like" evidence="2">
    <location>
        <begin position="1"/>
        <end position="145"/>
    </location>
</feature>
<keyword id="KW-0378">Hydrolase</keyword>
<keyword id="KW-0511">Multifunctional enzyme</keyword>
<keyword id="KW-0658">Purine biosynthesis</keyword>
<keyword id="KW-0808">Transferase</keyword>
<reference key="1">
    <citation type="submission" date="2006-08" db="EMBL/GenBank/DDBJ databases">
        <title>Complete sequence of chromosome 1 of Burkholderia cenocepacia HI2424.</title>
        <authorList>
            <person name="Copeland A."/>
            <person name="Lucas S."/>
            <person name="Lapidus A."/>
            <person name="Barry K."/>
            <person name="Detter J.C."/>
            <person name="Glavina del Rio T."/>
            <person name="Hammon N."/>
            <person name="Israni S."/>
            <person name="Pitluck S."/>
            <person name="Chain P."/>
            <person name="Malfatti S."/>
            <person name="Shin M."/>
            <person name="Vergez L."/>
            <person name="Schmutz J."/>
            <person name="Larimer F."/>
            <person name="Land M."/>
            <person name="Hauser L."/>
            <person name="Kyrpides N."/>
            <person name="Kim E."/>
            <person name="LiPuma J.J."/>
            <person name="Gonzalez C.F."/>
            <person name="Konstantinidis K."/>
            <person name="Tiedje J.M."/>
            <person name="Richardson P."/>
        </authorList>
    </citation>
    <scope>NUCLEOTIDE SEQUENCE [LARGE SCALE GENOMIC DNA]</scope>
    <source>
        <strain>HI2424</strain>
    </source>
</reference>
<gene>
    <name evidence="1" type="primary">purH</name>
    <name type="ordered locus">Bcen2424_0691</name>
</gene>
<evidence type="ECO:0000255" key="1">
    <source>
        <dbReference type="HAMAP-Rule" id="MF_00139"/>
    </source>
</evidence>
<evidence type="ECO:0000255" key="2">
    <source>
        <dbReference type="PROSITE-ProRule" id="PRU01202"/>
    </source>
</evidence>
<protein>
    <recommendedName>
        <fullName evidence="1">Bifunctional purine biosynthesis protein PurH</fullName>
    </recommendedName>
    <domain>
        <recommendedName>
            <fullName evidence="1">Phosphoribosylaminoimidazolecarboxamide formyltransferase</fullName>
            <ecNumber evidence="1">2.1.2.3</ecNumber>
        </recommendedName>
        <alternativeName>
            <fullName evidence="1">AICAR transformylase</fullName>
        </alternativeName>
    </domain>
    <domain>
        <recommendedName>
            <fullName evidence="1">IMP cyclohydrolase</fullName>
            <ecNumber evidence="1">3.5.4.10</ecNumber>
        </recommendedName>
        <alternativeName>
            <fullName evidence="1">ATIC</fullName>
        </alternativeName>
        <alternativeName>
            <fullName evidence="1">IMP synthase</fullName>
        </alternativeName>
        <alternativeName>
            <fullName evidence="1">Inosinicase</fullName>
        </alternativeName>
    </domain>
</protein>
<dbReference type="EC" id="2.1.2.3" evidence="1"/>
<dbReference type="EC" id="3.5.4.10" evidence="1"/>
<dbReference type="EMBL" id="CP000458">
    <property type="protein sequence ID" value="ABK07444.1"/>
    <property type="molecule type" value="Genomic_DNA"/>
</dbReference>
<dbReference type="RefSeq" id="WP_011694149.1">
    <property type="nucleotide sequence ID" value="NC_008542.1"/>
</dbReference>
<dbReference type="SMR" id="A0K4L7"/>
<dbReference type="KEGG" id="bch:Bcen2424_0691"/>
<dbReference type="HOGENOM" id="CLU_016316_5_2_4"/>
<dbReference type="UniPathway" id="UPA00074">
    <property type="reaction ID" value="UER00133"/>
</dbReference>
<dbReference type="UniPathway" id="UPA00074">
    <property type="reaction ID" value="UER00135"/>
</dbReference>
<dbReference type="GO" id="GO:0005829">
    <property type="term" value="C:cytosol"/>
    <property type="evidence" value="ECO:0007669"/>
    <property type="project" value="TreeGrafter"/>
</dbReference>
<dbReference type="GO" id="GO:0003937">
    <property type="term" value="F:IMP cyclohydrolase activity"/>
    <property type="evidence" value="ECO:0007669"/>
    <property type="project" value="UniProtKB-UniRule"/>
</dbReference>
<dbReference type="GO" id="GO:0004643">
    <property type="term" value="F:phosphoribosylaminoimidazolecarboxamide formyltransferase activity"/>
    <property type="evidence" value="ECO:0007669"/>
    <property type="project" value="UniProtKB-UniRule"/>
</dbReference>
<dbReference type="GO" id="GO:0006189">
    <property type="term" value="P:'de novo' IMP biosynthetic process"/>
    <property type="evidence" value="ECO:0007669"/>
    <property type="project" value="UniProtKB-UniRule"/>
</dbReference>
<dbReference type="CDD" id="cd01421">
    <property type="entry name" value="IMPCH"/>
    <property type="match status" value="1"/>
</dbReference>
<dbReference type="FunFam" id="3.40.140.20:FF:000001">
    <property type="entry name" value="Bifunctional purine biosynthesis protein PurH"/>
    <property type="match status" value="1"/>
</dbReference>
<dbReference type="FunFam" id="3.40.140.20:FF:000002">
    <property type="entry name" value="Bifunctional purine biosynthesis protein PurH"/>
    <property type="match status" value="1"/>
</dbReference>
<dbReference type="FunFam" id="3.40.50.1380:FF:000001">
    <property type="entry name" value="Bifunctional purine biosynthesis protein PurH"/>
    <property type="match status" value="1"/>
</dbReference>
<dbReference type="Gene3D" id="3.40.140.20">
    <property type="match status" value="2"/>
</dbReference>
<dbReference type="Gene3D" id="3.40.50.1380">
    <property type="entry name" value="Methylglyoxal synthase-like domain"/>
    <property type="match status" value="1"/>
</dbReference>
<dbReference type="HAMAP" id="MF_00139">
    <property type="entry name" value="PurH"/>
    <property type="match status" value="1"/>
</dbReference>
<dbReference type="InterPro" id="IPR024051">
    <property type="entry name" value="AICAR_Tfase_dup_dom_sf"/>
</dbReference>
<dbReference type="InterPro" id="IPR016193">
    <property type="entry name" value="Cytidine_deaminase-like"/>
</dbReference>
<dbReference type="InterPro" id="IPR011607">
    <property type="entry name" value="MGS-like_dom"/>
</dbReference>
<dbReference type="InterPro" id="IPR036914">
    <property type="entry name" value="MGS-like_dom_sf"/>
</dbReference>
<dbReference type="InterPro" id="IPR002695">
    <property type="entry name" value="PurH-like"/>
</dbReference>
<dbReference type="NCBIfam" id="NF002049">
    <property type="entry name" value="PRK00881.1"/>
    <property type="match status" value="1"/>
</dbReference>
<dbReference type="NCBIfam" id="TIGR00355">
    <property type="entry name" value="purH"/>
    <property type="match status" value="1"/>
</dbReference>
<dbReference type="PANTHER" id="PTHR11692:SF0">
    <property type="entry name" value="BIFUNCTIONAL PURINE BIOSYNTHESIS PROTEIN ATIC"/>
    <property type="match status" value="1"/>
</dbReference>
<dbReference type="PANTHER" id="PTHR11692">
    <property type="entry name" value="BIFUNCTIONAL PURINE BIOSYNTHESIS PROTEIN PURH"/>
    <property type="match status" value="1"/>
</dbReference>
<dbReference type="Pfam" id="PF01808">
    <property type="entry name" value="AICARFT_IMPCHas"/>
    <property type="match status" value="1"/>
</dbReference>
<dbReference type="Pfam" id="PF02142">
    <property type="entry name" value="MGS"/>
    <property type="match status" value="1"/>
</dbReference>
<dbReference type="PIRSF" id="PIRSF000414">
    <property type="entry name" value="AICARFT_IMPCHas"/>
    <property type="match status" value="1"/>
</dbReference>
<dbReference type="SMART" id="SM00798">
    <property type="entry name" value="AICARFT_IMPCHas"/>
    <property type="match status" value="1"/>
</dbReference>
<dbReference type="SMART" id="SM00851">
    <property type="entry name" value="MGS"/>
    <property type="match status" value="1"/>
</dbReference>
<dbReference type="SUPFAM" id="SSF53927">
    <property type="entry name" value="Cytidine deaminase-like"/>
    <property type="match status" value="1"/>
</dbReference>
<dbReference type="SUPFAM" id="SSF52335">
    <property type="entry name" value="Methylglyoxal synthase-like"/>
    <property type="match status" value="1"/>
</dbReference>
<dbReference type="PROSITE" id="PS51855">
    <property type="entry name" value="MGS"/>
    <property type="match status" value="1"/>
</dbReference>
<name>PUR9_BURCH</name>
<comment type="catalytic activity">
    <reaction evidence="1">
        <text>(6R)-10-formyltetrahydrofolate + 5-amino-1-(5-phospho-beta-D-ribosyl)imidazole-4-carboxamide = 5-formamido-1-(5-phospho-D-ribosyl)imidazole-4-carboxamide + (6S)-5,6,7,8-tetrahydrofolate</text>
        <dbReference type="Rhea" id="RHEA:22192"/>
        <dbReference type="ChEBI" id="CHEBI:57453"/>
        <dbReference type="ChEBI" id="CHEBI:58467"/>
        <dbReference type="ChEBI" id="CHEBI:58475"/>
        <dbReference type="ChEBI" id="CHEBI:195366"/>
        <dbReference type="EC" id="2.1.2.3"/>
    </reaction>
</comment>
<comment type="catalytic activity">
    <reaction evidence="1">
        <text>IMP + H2O = 5-formamido-1-(5-phospho-D-ribosyl)imidazole-4-carboxamide</text>
        <dbReference type="Rhea" id="RHEA:18445"/>
        <dbReference type="ChEBI" id="CHEBI:15377"/>
        <dbReference type="ChEBI" id="CHEBI:58053"/>
        <dbReference type="ChEBI" id="CHEBI:58467"/>
        <dbReference type="EC" id="3.5.4.10"/>
    </reaction>
</comment>
<comment type="pathway">
    <text evidence="1">Purine metabolism; IMP biosynthesis via de novo pathway; 5-formamido-1-(5-phospho-D-ribosyl)imidazole-4-carboxamide from 5-amino-1-(5-phospho-D-ribosyl)imidazole-4-carboxamide (10-formyl THF route): step 1/1.</text>
</comment>
<comment type="pathway">
    <text evidence="1">Purine metabolism; IMP biosynthesis via de novo pathway; IMP from 5-formamido-1-(5-phospho-D-ribosyl)imidazole-4-carboxamide: step 1/1.</text>
</comment>
<comment type="domain">
    <text evidence="1">The IMP cyclohydrolase activity resides in the N-terminal region.</text>
</comment>
<comment type="similarity">
    <text evidence="1">Belongs to the PurH family.</text>
</comment>